<protein>
    <recommendedName>
        <fullName>Plastin-1</fullName>
    </recommendedName>
    <alternativeName>
        <fullName>Intestine-specific plastin</fullName>
        <shortName>I-plastin</shortName>
    </alternativeName>
</protein>
<sequence>MENSTTTISREELEELQEAFNKIDIDNSGYVSDYELQDLFKEASLPLPGYKVREIVEKILSVADSNKDGKISFEEFVSLMQELKSKDISKTFRKIINKREGITAIGGTSTISSEGTQHSYSEEEKVAFVNWINKALENDPDCKHLIPMNPNDDSLFKSLADGILLCKMINLSEPDTIDERAINKKKLTPFTISENLNLALNSASAIGCTVVNIGASDLKEGKPHLVLGLLWQIIKVGLFADIEISRNEALIALLNEGEELEELMKLSPEELLLRWVNYHLTNAGWHTISNFSQDIKDSRAYFHLLNQIAPKGGEDGPAIAIDLSGINETNDLKRAGLMLQEADKLGCKQFVTPADVVSGNPKLNLAFVANLFNTYPCLHKPNNNDIDMNLLEGESKEERTFRNWMNSLGVNPYINHLYSDLADALVIFQLYEMIRVPVNWSHVNKPPYPALGGNMKKIENCNYAVELGKNKAKFSLVGIAGQDLNEGNSTLTLALVWQLMRRYTLNVLSDLGEGEKVNDEIIIKWVNQTLKSANKKTSISSFKDKSISTSLPVLDLIDAIAPNAVRQEMIRRENLSDEDKLNNAKYAISVARKIGARIYALPDDLVEVKPKMVMTVFACLMGKGLNRIK</sequence>
<keyword id="KW-0007">Acetylation</keyword>
<keyword id="KW-0009">Actin-binding</keyword>
<keyword id="KW-0106">Calcium</keyword>
<keyword id="KW-0966">Cell projection</keyword>
<keyword id="KW-0963">Cytoplasm</keyword>
<keyword id="KW-0209">Deafness</keyword>
<keyword id="KW-0225">Disease variant</keyword>
<keyword id="KW-0479">Metal-binding</keyword>
<keyword id="KW-1010">Non-syndromic deafness</keyword>
<keyword id="KW-0597">Phosphoprotein</keyword>
<keyword id="KW-1267">Proteomics identification</keyword>
<keyword id="KW-1185">Reference proteome</keyword>
<keyword id="KW-0677">Repeat</keyword>
<gene>
    <name type="primary">PLS1</name>
</gene>
<evidence type="ECO:0000250" key="1"/>
<evidence type="ECO:0000250" key="2">
    <source>
        <dbReference type="UniProtKB" id="Q3V0K9"/>
    </source>
</evidence>
<evidence type="ECO:0000255" key="3">
    <source>
        <dbReference type="PROSITE-ProRule" id="PRU00044"/>
    </source>
</evidence>
<evidence type="ECO:0000255" key="4">
    <source>
        <dbReference type="PROSITE-ProRule" id="PRU00448"/>
    </source>
</evidence>
<evidence type="ECO:0000269" key="5">
    <source>
    </source>
</evidence>
<evidence type="ECO:0000269" key="6">
    <source>
    </source>
</evidence>
<evidence type="ECO:0000269" key="7">
    <source>
    </source>
</evidence>
<evidence type="ECO:0000269" key="8">
    <source>
    </source>
</evidence>
<evidence type="ECO:0000305" key="9"/>
<evidence type="ECO:0007744" key="10">
    <source>
    </source>
</evidence>
<feature type="chain" id="PRO_0000073750" description="Plastin-1">
    <location>
        <begin position="1"/>
        <end position="629"/>
    </location>
</feature>
<feature type="domain" description="EF-hand 1" evidence="4">
    <location>
        <begin position="11"/>
        <end position="46"/>
    </location>
</feature>
<feature type="domain" description="EF-hand 2" evidence="4">
    <location>
        <begin position="51"/>
        <end position="86"/>
    </location>
</feature>
<feature type="domain" description="Calponin-homology (CH) 1" evidence="3">
    <location>
        <begin position="122"/>
        <end position="238"/>
    </location>
</feature>
<feature type="domain" description="Calponin-homology (CH) 2" evidence="3">
    <location>
        <begin position="266"/>
        <end position="376"/>
    </location>
</feature>
<feature type="domain" description="Calponin-homology (CH) 3" evidence="3">
    <location>
        <begin position="395"/>
        <end position="504"/>
    </location>
</feature>
<feature type="domain" description="Calponin-homology (CH) 4" evidence="3">
    <location>
        <begin position="516"/>
        <end position="625"/>
    </location>
</feature>
<feature type="region of interest" description="Actin-binding 1">
    <location>
        <begin position="108"/>
        <end position="380"/>
    </location>
</feature>
<feature type="region of interest" description="Actin-binding 2">
    <location>
        <begin position="381"/>
        <end position="625"/>
    </location>
</feature>
<feature type="binding site" evidence="4">
    <location>
        <position position="24"/>
    </location>
    <ligand>
        <name>Ca(2+)</name>
        <dbReference type="ChEBI" id="CHEBI:29108"/>
        <label>1</label>
    </ligand>
</feature>
<feature type="binding site" evidence="4">
    <location>
        <position position="26"/>
    </location>
    <ligand>
        <name>Ca(2+)</name>
        <dbReference type="ChEBI" id="CHEBI:29108"/>
        <label>1</label>
    </ligand>
</feature>
<feature type="binding site" evidence="4">
    <location>
        <position position="28"/>
    </location>
    <ligand>
        <name>Ca(2+)</name>
        <dbReference type="ChEBI" id="CHEBI:29108"/>
        <label>1</label>
    </ligand>
</feature>
<feature type="binding site" evidence="4">
    <location>
        <position position="30"/>
    </location>
    <ligand>
        <name>Ca(2+)</name>
        <dbReference type="ChEBI" id="CHEBI:29108"/>
        <label>1</label>
    </ligand>
</feature>
<feature type="binding site" evidence="4">
    <location>
        <position position="35"/>
    </location>
    <ligand>
        <name>Ca(2+)</name>
        <dbReference type="ChEBI" id="CHEBI:29108"/>
        <label>1</label>
    </ligand>
</feature>
<feature type="binding site" evidence="4">
    <location>
        <position position="64"/>
    </location>
    <ligand>
        <name>Ca(2+)</name>
        <dbReference type="ChEBI" id="CHEBI:29108"/>
        <label>2</label>
    </ligand>
</feature>
<feature type="binding site" evidence="4">
    <location>
        <position position="66"/>
    </location>
    <ligand>
        <name>Ca(2+)</name>
        <dbReference type="ChEBI" id="CHEBI:29108"/>
        <label>2</label>
    </ligand>
</feature>
<feature type="binding site" evidence="4">
    <location>
        <position position="68"/>
    </location>
    <ligand>
        <name>Ca(2+)</name>
        <dbReference type="ChEBI" id="CHEBI:29108"/>
        <label>2</label>
    </ligand>
</feature>
<feature type="binding site" evidence="4">
    <location>
        <position position="70"/>
    </location>
    <ligand>
        <name>Ca(2+)</name>
        <dbReference type="ChEBI" id="CHEBI:29108"/>
        <label>2</label>
    </ligand>
</feature>
<feature type="binding site" evidence="4">
    <location>
        <position position="75"/>
    </location>
    <ligand>
        <name>Ca(2+)</name>
        <dbReference type="ChEBI" id="CHEBI:29108"/>
        <label>2</label>
    </ligand>
</feature>
<feature type="modified residue" description="N-acetylmethionine" evidence="10">
    <location>
        <position position="1"/>
    </location>
</feature>
<feature type="sequence variant" id="VAR_083821" description="In DFNA76." evidence="6">
    <original>F</original>
    <variation>S</variation>
    <location>
        <position position="128"/>
    </location>
</feature>
<feature type="sequence variant" id="VAR_048660" description="In dbSNP:rs35710125.">
    <original>I</original>
    <variation>M</variation>
    <location>
        <position position="146"/>
    </location>
</feature>
<feature type="sequence variant" id="VAR_048661" description="In dbSNP:rs35435507.">
    <original>S</original>
    <variation>L</variation>
    <location>
        <position position="216"/>
    </location>
</feature>
<feature type="sequence variant" id="VAR_083822" description="In DFNA76." evidence="6">
    <original>L</original>
    <variation>R</variation>
    <location>
        <position position="238"/>
    </location>
</feature>
<feature type="sequence variant" id="VAR_083823" description="In DFNA76." evidence="6 7">
    <original>E</original>
    <variation>K</variation>
    <location>
        <position position="269"/>
    </location>
</feature>
<feature type="sequence variant" id="VAR_083824" description="In DFNA76." evidence="5">
    <original>L</original>
    <variation>F</variation>
    <location>
        <position position="363"/>
    </location>
</feature>
<feature type="sequence conflict" description="In Ref. 2; BAF83005." evidence="9" ref="2">
    <original>P</original>
    <variation>L</variation>
    <location>
        <position position="317"/>
    </location>
</feature>
<feature type="sequence conflict" description="In Ref. 4; AAH31083." evidence="9" ref="4">
    <original>S</original>
    <variation>R</variation>
    <location>
        <position position="441"/>
    </location>
</feature>
<feature type="sequence conflict" description="In Ref. 1; AAA19869." evidence="9" ref="1">
    <original>G</original>
    <variation>R</variation>
    <location>
        <position position="487"/>
    </location>
</feature>
<comment type="function">
    <text evidence="2">Actin-bundling protein. In the inner ear, it is required for stereocilia formation. Mediates liquid packing of actin filaments that is necessary for stereocilia to grow to their proper dimensions.</text>
</comment>
<comment type="subunit">
    <text evidence="1">Monomer.</text>
</comment>
<comment type="subcellular location">
    <subcellularLocation>
        <location evidence="2">Cytoplasm</location>
    </subcellularLocation>
    <subcellularLocation>
        <location evidence="2">Cell projection</location>
        <location evidence="2">Stereocilium</location>
    </subcellularLocation>
</comment>
<comment type="tissue specificity">
    <text evidence="8">In small intestine, colon, and kidney; relatively lower levels of expression are detected in the lung and stomach.</text>
</comment>
<comment type="PTM">
    <text evidence="1">Phosphorylated.</text>
</comment>
<comment type="disease" evidence="5 6 7">
    <disease id="DI-05762">
        <name>Deafness, autosomal dominant, 76</name>
        <acronym>DFNA76</acronym>
        <description>A form of non-syndromic deafness characterized by mild to profound sensorineural hearing loss and variable age at onset. Sensorineural hearing loss results from damage to the neural receptors of the inner ear, the nerve pathways to the brain, or the area of the brain that receives sound information.</description>
        <dbReference type="MIM" id="618787"/>
    </disease>
    <text>The disease is caused by variants affecting the gene represented in this entry.</text>
</comment>
<proteinExistence type="evidence at protein level"/>
<name>PLSI_HUMAN</name>
<accession>Q14651</accession>
<accession>A8K2Q1</accession>
<accession>D3DNG3</accession>
<accession>Q8NEG6</accession>
<reference key="1">
    <citation type="journal article" date="1994" name="Mol. Cell. Biol.">
        <title>Identification of I-plastin, a human fimbrin isoform expressed in intestine and kidney.</title>
        <authorList>
            <person name="Lin C.-S."/>
            <person name="Shen W."/>
            <person name="Chen Z.P."/>
            <person name="Tu Y.-H."/>
            <person name="Matsudaira P."/>
        </authorList>
    </citation>
    <scope>NUCLEOTIDE SEQUENCE [MRNA]</scope>
    <scope>TISSUE SPECIFICITY</scope>
    <source>
        <tissue>Small intestine</tissue>
    </source>
</reference>
<reference key="2">
    <citation type="journal article" date="2004" name="Nat. Genet.">
        <title>Complete sequencing and characterization of 21,243 full-length human cDNAs.</title>
        <authorList>
            <person name="Ota T."/>
            <person name="Suzuki Y."/>
            <person name="Nishikawa T."/>
            <person name="Otsuki T."/>
            <person name="Sugiyama T."/>
            <person name="Irie R."/>
            <person name="Wakamatsu A."/>
            <person name="Hayashi K."/>
            <person name="Sato H."/>
            <person name="Nagai K."/>
            <person name="Kimura K."/>
            <person name="Makita H."/>
            <person name="Sekine M."/>
            <person name="Obayashi M."/>
            <person name="Nishi T."/>
            <person name="Shibahara T."/>
            <person name="Tanaka T."/>
            <person name="Ishii S."/>
            <person name="Yamamoto J."/>
            <person name="Saito K."/>
            <person name="Kawai Y."/>
            <person name="Isono Y."/>
            <person name="Nakamura Y."/>
            <person name="Nagahari K."/>
            <person name="Murakami K."/>
            <person name="Yasuda T."/>
            <person name="Iwayanagi T."/>
            <person name="Wagatsuma M."/>
            <person name="Shiratori A."/>
            <person name="Sudo H."/>
            <person name="Hosoiri T."/>
            <person name="Kaku Y."/>
            <person name="Kodaira H."/>
            <person name="Kondo H."/>
            <person name="Sugawara M."/>
            <person name="Takahashi M."/>
            <person name="Kanda K."/>
            <person name="Yokoi T."/>
            <person name="Furuya T."/>
            <person name="Kikkawa E."/>
            <person name="Omura Y."/>
            <person name="Abe K."/>
            <person name="Kamihara K."/>
            <person name="Katsuta N."/>
            <person name="Sato K."/>
            <person name="Tanikawa M."/>
            <person name="Yamazaki M."/>
            <person name="Ninomiya K."/>
            <person name="Ishibashi T."/>
            <person name="Yamashita H."/>
            <person name="Murakawa K."/>
            <person name="Fujimori K."/>
            <person name="Tanai H."/>
            <person name="Kimata M."/>
            <person name="Watanabe M."/>
            <person name="Hiraoka S."/>
            <person name="Chiba Y."/>
            <person name="Ishida S."/>
            <person name="Ono Y."/>
            <person name="Takiguchi S."/>
            <person name="Watanabe S."/>
            <person name="Yosida M."/>
            <person name="Hotuta T."/>
            <person name="Kusano J."/>
            <person name="Kanehori K."/>
            <person name="Takahashi-Fujii A."/>
            <person name="Hara H."/>
            <person name="Tanase T.-O."/>
            <person name="Nomura Y."/>
            <person name="Togiya S."/>
            <person name="Komai F."/>
            <person name="Hara R."/>
            <person name="Takeuchi K."/>
            <person name="Arita M."/>
            <person name="Imose N."/>
            <person name="Musashino K."/>
            <person name="Yuuki H."/>
            <person name="Oshima A."/>
            <person name="Sasaki N."/>
            <person name="Aotsuka S."/>
            <person name="Yoshikawa Y."/>
            <person name="Matsunawa H."/>
            <person name="Ichihara T."/>
            <person name="Shiohata N."/>
            <person name="Sano S."/>
            <person name="Moriya S."/>
            <person name="Momiyama H."/>
            <person name="Satoh N."/>
            <person name="Takami S."/>
            <person name="Terashima Y."/>
            <person name="Suzuki O."/>
            <person name="Nakagawa S."/>
            <person name="Senoh A."/>
            <person name="Mizoguchi H."/>
            <person name="Goto Y."/>
            <person name="Shimizu F."/>
            <person name="Wakebe H."/>
            <person name="Hishigaki H."/>
            <person name="Watanabe T."/>
            <person name="Sugiyama A."/>
            <person name="Takemoto M."/>
            <person name="Kawakami B."/>
            <person name="Yamazaki M."/>
            <person name="Watanabe K."/>
            <person name="Kumagai A."/>
            <person name="Itakura S."/>
            <person name="Fukuzumi Y."/>
            <person name="Fujimori Y."/>
            <person name="Komiyama M."/>
            <person name="Tashiro H."/>
            <person name="Tanigami A."/>
            <person name="Fujiwara T."/>
            <person name="Ono T."/>
            <person name="Yamada K."/>
            <person name="Fujii Y."/>
            <person name="Ozaki K."/>
            <person name="Hirao M."/>
            <person name="Ohmori Y."/>
            <person name="Kawabata A."/>
            <person name="Hikiji T."/>
            <person name="Kobatake N."/>
            <person name="Inagaki H."/>
            <person name="Ikema Y."/>
            <person name="Okamoto S."/>
            <person name="Okitani R."/>
            <person name="Kawakami T."/>
            <person name="Noguchi S."/>
            <person name="Itoh T."/>
            <person name="Shigeta K."/>
            <person name="Senba T."/>
            <person name="Matsumura K."/>
            <person name="Nakajima Y."/>
            <person name="Mizuno T."/>
            <person name="Morinaga M."/>
            <person name="Sasaki M."/>
            <person name="Togashi T."/>
            <person name="Oyama M."/>
            <person name="Hata H."/>
            <person name="Watanabe M."/>
            <person name="Komatsu T."/>
            <person name="Mizushima-Sugano J."/>
            <person name="Satoh T."/>
            <person name="Shirai Y."/>
            <person name="Takahashi Y."/>
            <person name="Nakagawa K."/>
            <person name="Okumura K."/>
            <person name="Nagase T."/>
            <person name="Nomura N."/>
            <person name="Kikuchi H."/>
            <person name="Masuho Y."/>
            <person name="Yamashita R."/>
            <person name="Nakai K."/>
            <person name="Yada T."/>
            <person name="Nakamura Y."/>
            <person name="Ohara O."/>
            <person name="Isogai T."/>
            <person name="Sugano S."/>
        </authorList>
    </citation>
    <scope>NUCLEOTIDE SEQUENCE [LARGE SCALE MRNA]</scope>
    <source>
        <tissue>Tongue</tissue>
    </source>
</reference>
<reference key="3">
    <citation type="submission" date="2005-09" db="EMBL/GenBank/DDBJ databases">
        <authorList>
            <person name="Mural R.J."/>
            <person name="Istrail S."/>
            <person name="Sutton G.G."/>
            <person name="Florea L."/>
            <person name="Halpern A.L."/>
            <person name="Mobarry C.M."/>
            <person name="Lippert R."/>
            <person name="Walenz B."/>
            <person name="Shatkay H."/>
            <person name="Dew I."/>
            <person name="Miller J.R."/>
            <person name="Flanigan M.J."/>
            <person name="Edwards N.J."/>
            <person name="Bolanos R."/>
            <person name="Fasulo D."/>
            <person name="Halldorsson B.V."/>
            <person name="Hannenhalli S."/>
            <person name="Turner R."/>
            <person name="Yooseph S."/>
            <person name="Lu F."/>
            <person name="Nusskern D.R."/>
            <person name="Shue B.C."/>
            <person name="Zheng X.H."/>
            <person name="Zhong F."/>
            <person name="Delcher A.L."/>
            <person name="Huson D.H."/>
            <person name="Kravitz S.A."/>
            <person name="Mouchard L."/>
            <person name="Reinert K."/>
            <person name="Remington K.A."/>
            <person name="Clark A.G."/>
            <person name="Waterman M.S."/>
            <person name="Eichler E.E."/>
            <person name="Adams M.D."/>
            <person name="Hunkapiller M.W."/>
            <person name="Myers E.W."/>
            <person name="Venter J.C."/>
        </authorList>
    </citation>
    <scope>NUCLEOTIDE SEQUENCE [LARGE SCALE GENOMIC DNA]</scope>
</reference>
<reference key="4">
    <citation type="journal article" date="2004" name="Genome Res.">
        <title>The status, quality, and expansion of the NIH full-length cDNA project: the Mammalian Gene Collection (MGC).</title>
        <authorList>
            <consortium name="The MGC Project Team"/>
        </authorList>
    </citation>
    <scope>NUCLEOTIDE SEQUENCE [LARGE SCALE MRNA]</scope>
    <source>
        <tissue>Testis</tissue>
    </source>
</reference>
<reference key="5">
    <citation type="journal article" date="2011" name="BMC Syst. Biol.">
        <title>Initial characterization of the human central proteome.</title>
        <authorList>
            <person name="Burkard T.R."/>
            <person name="Planyavsky M."/>
            <person name="Kaupe I."/>
            <person name="Breitwieser F.P."/>
            <person name="Buerckstuemmer T."/>
            <person name="Bennett K.L."/>
            <person name="Superti-Furga G."/>
            <person name="Colinge J."/>
        </authorList>
    </citation>
    <scope>IDENTIFICATION BY MASS SPECTROMETRY [LARGE SCALE ANALYSIS]</scope>
</reference>
<reference key="6">
    <citation type="journal article" date="2012" name="Proc. Natl. Acad. Sci. U.S.A.">
        <title>N-terminal acetylome analyses and functional insights of the N-terminal acetyltransferase NatB.</title>
        <authorList>
            <person name="Van Damme P."/>
            <person name="Lasa M."/>
            <person name="Polevoda B."/>
            <person name="Gazquez C."/>
            <person name="Elosegui-Artola A."/>
            <person name="Kim D.S."/>
            <person name="De Juan-Pardo E."/>
            <person name="Demeyer K."/>
            <person name="Hole K."/>
            <person name="Larrea E."/>
            <person name="Timmerman E."/>
            <person name="Prieto J."/>
            <person name="Arnesen T."/>
            <person name="Sherman F."/>
            <person name="Gevaert K."/>
            <person name="Aldabe R."/>
        </authorList>
    </citation>
    <scope>ACETYLATION [LARGE SCALE ANALYSIS] AT MET-1</scope>
    <scope>IDENTIFICATION BY MASS SPECTROMETRY [LARGE SCALE ANALYSIS]</scope>
</reference>
<reference key="7">
    <citation type="journal article" date="2014" name="J. Proteomics">
        <title>An enzyme assisted RP-RPLC approach for in-depth analysis of human liver phosphoproteome.</title>
        <authorList>
            <person name="Bian Y."/>
            <person name="Song C."/>
            <person name="Cheng K."/>
            <person name="Dong M."/>
            <person name="Wang F."/>
            <person name="Huang J."/>
            <person name="Sun D."/>
            <person name="Wang L."/>
            <person name="Ye M."/>
            <person name="Zou H."/>
        </authorList>
    </citation>
    <scope>IDENTIFICATION BY MASS SPECTROMETRY [LARGE SCALE ANALYSIS]</scope>
    <source>
        <tissue>Liver</tissue>
    </source>
</reference>
<reference key="8">
    <citation type="journal article" date="2019" name="Clin. Genet.">
        <title>Novel variant p.E269K confirms causative role of PLS1 mutations in autosomal dominant hearing loss.</title>
        <authorList>
            <person name="Diaz-Horta O."/>
            <person name="Bademci G."/>
            <person name="Tokgoz-Yilmaz S."/>
            <person name="Guo S."/>
            <person name="Zafeer F."/>
            <person name="Sineni C.J."/>
            <person name="Duman D."/>
            <person name="Farooq A."/>
            <person name="Tekin M."/>
        </authorList>
    </citation>
    <scope>INVOLVEMENT IN DFNA76</scope>
    <scope>VARIANT DFNA76 LYS-269</scope>
</reference>
<reference key="9">
    <citation type="journal article" date="2019" name="Eur. J. Hum. Genet.">
        <title>Hearing impairment locus heterogeneity and identification of PLS1 as a new autosomal dominant gene in Hungarian Roma.</title>
        <authorList>
            <person name="Schrauwen I."/>
            <person name="Melegh B.I."/>
            <person name="Chakchouk I."/>
            <person name="Acharya A."/>
            <person name="Nasir A."/>
            <person name="Poston A."/>
            <person name="Cornejo-Sanchez D.M."/>
            <person name="Szabo Z."/>
            <person name="Karosi T."/>
            <person name="Bene J."/>
            <person name="Melegh B."/>
            <person name="Leal S.M."/>
        </authorList>
    </citation>
    <scope>INVOLVEMENT IN DFNA76</scope>
    <scope>VARIANT DFNA76 PHE-363</scope>
</reference>
<reference key="10">
    <citation type="journal article" date="2019" name="Hum. Mutat.">
        <title>Mutations in PLS1, encoding fimbrin, cause autosomal dominant nonsyndromic hearing loss.</title>
        <authorList>
            <person name="Morgan A."/>
            <person name="Koboldt D.C."/>
            <person name="Barrie E.S."/>
            <person name="Crist E.R."/>
            <person name="Garcia Garcia G."/>
            <person name="Mezzavilla M."/>
            <person name="Faletra F."/>
            <person name="Mihalic Mosher T."/>
            <person name="Wilson R.K."/>
            <person name="Blanchet C."/>
            <person name="Manickam K."/>
            <person name="Roux A.F."/>
            <person name="Gasparini P."/>
            <person name="Dell'Orco D."/>
            <person name="Girotto G."/>
        </authorList>
    </citation>
    <scope>INVOLVEMENT IN DFNA76</scope>
    <scope>VARIANTS DFNA76 SER-128; ARG-238 AND LYS-269</scope>
</reference>
<dbReference type="EMBL" id="L20826">
    <property type="protein sequence ID" value="AAA19869.1"/>
    <property type="molecule type" value="mRNA"/>
</dbReference>
<dbReference type="EMBL" id="AK290316">
    <property type="protein sequence ID" value="BAF83005.1"/>
    <property type="molecule type" value="mRNA"/>
</dbReference>
<dbReference type="EMBL" id="CH471052">
    <property type="protein sequence ID" value="EAW78965.1"/>
    <property type="molecule type" value="Genomic_DNA"/>
</dbReference>
<dbReference type="EMBL" id="CH471052">
    <property type="protein sequence ID" value="EAW78967.1"/>
    <property type="molecule type" value="Genomic_DNA"/>
</dbReference>
<dbReference type="EMBL" id="BC031083">
    <property type="protein sequence ID" value="AAH31083.1"/>
    <property type="molecule type" value="mRNA"/>
</dbReference>
<dbReference type="CCDS" id="CCDS3125.1"/>
<dbReference type="PIR" id="A56536">
    <property type="entry name" value="A56536"/>
</dbReference>
<dbReference type="RefSeq" id="NP_001138791.1">
    <property type="nucleotide sequence ID" value="NM_001145319.2"/>
</dbReference>
<dbReference type="RefSeq" id="NP_001165783.1">
    <property type="nucleotide sequence ID" value="NM_001172312.2"/>
</dbReference>
<dbReference type="RefSeq" id="NP_002661.2">
    <property type="nucleotide sequence ID" value="NM_002670.3"/>
</dbReference>
<dbReference type="RefSeq" id="XP_006713723.1">
    <property type="nucleotide sequence ID" value="XM_006713660.4"/>
</dbReference>
<dbReference type="RefSeq" id="XP_011511202.1">
    <property type="nucleotide sequence ID" value="XM_011512900.3"/>
</dbReference>
<dbReference type="RefSeq" id="XP_011511203.1">
    <property type="nucleotide sequence ID" value="XM_011512901.2"/>
</dbReference>
<dbReference type="RefSeq" id="XP_011511205.1">
    <property type="nucleotide sequence ID" value="XM_011512903.3"/>
</dbReference>
<dbReference type="RefSeq" id="XP_016862115.1">
    <property type="nucleotide sequence ID" value="XM_017006626.1"/>
</dbReference>
<dbReference type="RefSeq" id="XP_016862116.1">
    <property type="nucleotide sequence ID" value="XM_017006627.2"/>
</dbReference>
<dbReference type="RefSeq" id="XP_047304277.1">
    <property type="nucleotide sequence ID" value="XM_047448321.1"/>
</dbReference>
<dbReference type="RefSeq" id="XP_047304278.1">
    <property type="nucleotide sequence ID" value="XM_047448322.1"/>
</dbReference>
<dbReference type="RefSeq" id="XP_047304279.1">
    <property type="nucleotide sequence ID" value="XM_047448323.1"/>
</dbReference>
<dbReference type="RefSeq" id="XP_047304280.1">
    <property type="nucleotide sequence ID" value="XM_047448324.1"/>
</dbReference>
<dbReference type="RefSeq" id="XP_047304281.1">
    <property type="nucleotide sequence ID" value="XM_047448325.1"/>
</dbReference>
<dbReference type="RefSeq" id="XP_047304282.1">
    <property type="nucleotide sequence ID" value="XM_047448326.1"/>
</dbReference>
<dbReference type="RefSeq" id="XP_047304283.1">
    <property type="nucleotide sequence ID" value="XM_047448327.1"/>
</dbReference>
<dbReference type="RefSeq" id="XP_047304284.1">
    <property type="nucleotide sequence ID" value="XM_047448328.1"/>
</dbReference>
<dbReference type="RefSeq" id="XP_054202846.1">
    <property type="nucleotide sequence ID" value="XM_054346871.1"/>
</dbReference>
<dbReference type="RefSeq" id="XP_054202847.1">
    <property type="nucleotide sequence ID" value="XM_054346872.1"/>
</dbReference>
<dbReference type="RefSeq" id="XP_054202848.1">
    <property type="nucleotide sequence ID" value="XM_054346873.1"/>
</dbReference>
<dbReference type="RefSeq" id="XP_054202849.1">
    <property type="nucleotide sequence ID" value="XM_054346874.1"/>
</dbReference>
<dbReference type="RefSeq" id="XP_054202850.1">
    <property type="nucleotide sequence ID" value="XM_054346875.1"/>
</dbReference>
<dbReference type="RefSeq" id="XP_054202851.1">
    <property type="nucleotide sequence ID" value="XM_054346876.1"/>
</dbReference>
<dbReference type="RefSeq" id="XP_054202852.1">
    <property type="nucleotide sequence ID" value="XM_054346877.1"/>
</dbReference>
<dbReference type="RefSeq" id="XP_054202853.1">
    <property type="nucleotide sequence ID" value="XM_054346878.1"/>
</dbReference>
<dbReference type="RefSeq" id="XP_054202854.1">
    <property type="nucleotide sequence ID" value="XM_054346879.1"/>
</dbReference>
<dbReference type="RefSeq" id="XP_054202855.1">
    <property type="nucleotide sequence ID" value="XM_054346880.1"/>
</dbReference>
<dbReference type="RefSeq" id="XP_054202856.1">
    <property type="nucleotide sequence ID" value="XM_054346881.1"/>
</dbReference>
<dbReference type="RefSeq" id="XP_054202857.1">
    <property type="nucleotide sequence ID" value="XM_054346882.1"/>
</dbReference>
<dbReference type="RefSeq" id="XP_054202858.1">
    <property type="nucleotide sequence ID" value="XM_054346883.1"/>
</dbReference>
<dbReference type="SMR" id="Q14651"/>
<dbReference type="BioGRID" id="111371">
    <property type="interactions" value="153"/>
</dbReference>
<dbReference type="FunCoup" id="Q14651">
    <property type="interactions" value="1010"/>
</dbReference>
<dbReference type="IntAct" id="Q14651">
    <property type="interactions" value="84"/>
</dbReference>
<dbReference type="MINT" id="Q14651"/>
<dbReference type="STRING" id="9606.ENSP00000336831"/>
<dbReference type="GlyCosmos" id="Q14651">
    <property type="glycosylation" value="2 sites, 1 glycan"/>
</dbReference>
<dbReference type="GlyGen" id="Q14651">
    <property type="glycosylation" value="4 sites, 1 O-linked glycan (3 sites)"/>
</dbReference>
<dbReference type="iPTMnet" id="Q14651"/>
<dbReference type="MetOSite" id="Q14651"/>
<dbReference type="PhosphoSitePlus" id="Q14651"/>
<dbReference type="SwissPalm" id="Q14651"/>
<dbReference type="BioMuta" id="PLS1"/>
<dbReference type="DMDM" id="224471848"/>
<dbReference type="jPOST" id="Q14651"/>
<dbReference type="MassIVE" id="Q14651"/>
<dbReference type="PaxDb" id="9606-ENSP00000336831"/>
<dbReference type="PeptideAtlas" id="Q14651"/>
<dbReference type="ProteomicsDB" id="60090"/>
<dbReference type="Pumba" id="Q14651"/>
<dbReference type="Antibodypedia" id="33495">
    <property type="antibodies" value="148 antibodies from 25 providers"/>
</dbReference>
<dbReference type="DNASU" id="5357"/>
<dbReference type="Ensembl" id="ENST00000337777.7">
    <property type="protein sequence ID" value="ENSP00000336831.3"/>
    <property type="gene ID" value="ENSG00000120756.13"/>
</dbReference>
<dbReference type="Ensembl" id="ENST00000457734.7">
    <property type="protein sequence ID" value="ENSP00000387890.2"/>
    <property type="gene ID" value="ENSG00000120756.13"/>
</dbReference>
<dbReference type="Ensembl" id="ENST00000497002.1">
    <property type="protein sequence ID" value="ENSP00000418700.1"/>
    <property type="gene ID" value="ENSG00000120756.13"/>
</dbReference>
<dbReference type="GeneID" id="5357"/>
<dbReference type="KEGG" id="hsa:5357"/>
<dbReference type="MANE-Select" id="ENST00000457734.7">
    <property type="protein sequence ID" value="ENSP00000387890.2"/>
    <property type="RefSeq nucleotide sequence ID" value="NM_001145319.2"/>
    <property type="RefSeq protein sequence ID" value="NP_001138791.1"/>
</dbReference>
<dbReference type="UCSC" id="uc003euz.4">
    <property type="organism name" value="human"/>
</dbReference>
<dbReference type="AGR" id="HGNC:9090"/>
<dbReference type="CTD" id="5357"/>
<dbReference type="DisGeNET" id="5357"/>
<dbReference type="GeneCards" id="PLS1"/>
<dbReference type="HGNC" id="HGNC:9090">
    <property type="gene designation" value="PLS1"/>
</dbReference>
<dbReference type="HPA" id="ENSG00000120756">
    <property type="expression patterns" value="Tissue enriched (intestine)"/>
</dbReference>
<dbReference type="MalaCards" id="PLS1"/>
<dbReference type="MIM" id="602734">
    <property type="type" value="gene"/>
</dbReference>
<dbReference type="MIM" id="618787">
    <property type="type" value="phenotype"/>
</dbReference>
<dbReference type="neXtProt" id="NX_Q14651"/>
<dbReference type="OpenTargets" id="ENSG00000120756"/>
<dbReference type="Orphanet" id="90635">
    <property type="disease" value="Rare autosomal dominant non-syndromic sensorineural deafness type DFNA"/>
</dbReference>
<dbReference type="PharmGKB" id="PA33417"/>
<dbReference type="VEuPathDB" id="HostDB:ENSG00000120756"/>
<dbReference type="eggNOG" id="KOG0046">
    <property type="taxonomic scope" value="Eukaryota"/>
</dbReference>
<dbReference type="GeneTree" id="ENSGT00950000183097"/>
<dbReference type="HOGENOM" id="CLU_015284_2_0_1"/>
<dbReference type="InParanoid" id="Q14651"/>
<dbReference type="OMA" id="GILLXEN"/>
<dbReference type="OrthoDB" id="431378at2759"/>
<dbReference type="PAN-GO" id="Q14651">
    <property type="GO annotations" value="6 GO annotations based on evolutionary models"/>
</dbReference>
<dbReference type="PhylomeDB" id="Q14651"/>
<dbReference type="TreeFam" id="TF300680"/>
<dbReference type="PathwayCommons" id="Q14651"/>
<dbReference type="Reactome" id="R-HSA-9662360">
    <property type="pathway name" value="Sensory processing of sound by inner hair cells of the cochlea"/>
</dbReference>
<dbReference type="Reactome" id="R-HSA-9662361">
    <property type="pathway name" value="Sensory processing of sound by outer hair cells of the cochlea"/>
</dbReference>
<dbReference type="SignaLink" id="Q14651"/>
<dbReference type="BioGRID-ORCS" id="5357">
    <property type="hits" value="15 hits in 1158 CRISPR screens"/>
</dbReference>
<dbReference type="GenomeRNAi" id="5357"/>
<dbReference type="Pharos" id="Q14651">
    <property type="development level" value="Tbio"/>
</dbReference>
<dbReference type="PRO" id="PR:Q14651"/>
<dbReference type="Proteomes" id="UP000005640">
    <property type="component" value="Chromosome 3"/>
</dbReference>
<dbReference type="RNAct" id="Q14651">
    <property type="molecule type" value="protein"/>
</dbReference>
<dbReference type="Bgee" id="ENSG00000120756">
    <property type="expression patterns" value="Expressed in secondary oocyte and 159 other cell types or tissues"/>
</dbReference>
<dbReference type="ExpressionAtlas" id="Q14651">
    <property type="expression patterns" value="baseline and differential"/>
</dbReference>
<dbReference type="GO" id="GO:0005884">
    <property type="term" value="C:actin filament"/>
    <property type="evidence" value="ECO:0000318"/>
    <property type="project" value="GO_Central"/>
</dbReference>
<dbReference type="GO" id="GO:0032432">
    <property type="term" value="C:actin filament bundle"/>
    <property type="evidence" value="ECO:0000318"/>
    <property type="project" value="GO_Central"/>
</dbReference>
<dbReference type="GO" id="GO:0005903">
    <property type="term" value="C:brush border"/>
    <property type="evidence" value="ECO:0000250"/>
    <property type="project" value="UniProtKB"/>
</dbReference>
<dbReference type="GO" id="GO:0005737">
    <property type="term" value="C:cytoplasm"/>
    <property type="evidence" value="ECO:0000318"/>
    <property type="project" value="GO_Central"/>
</dbReference>
<dbReference type="GO" id="GO:0005829">
    <property type="term" value="C:cytosol"/>
    <property type="evidence" value="ECO:0000314"/>
    <property type="project" value="HPA"/>
</dbReference>
<dbReference type="GO" id="GO:0070062">
    <property type="term" value="C:extracellular exosome"/>
    <property type="evidence" value="ECO:0007005"/>
    <property type="project" value="UniProtKB"/>
</dbReference>
<dbReference type="GO" id="GO:0005886">
    <property type="term" value="C:plasma membrane"/>
    <property type="evidence" value="ECO:0000314"/>
    <property type="project" value="HPA"/>
</dbReference>
<dbReference type="GO" id="GO:0032420">
    <property type="term" value="C:stereocilium"/>
    <property type="evidence" value="ECO:0000250"/>
    <property type="project" value="UniProtKB"/>
</dbReference>
<dbReference type="GO" id="GO:1990357">
    <property type="term" value="C:terminal web"/>
    <property type="evidence" value="ECO:0007669"/>
    <property type="project" value="Ensembl"/>
</dbReference>
<dbReference type="GO" id="GO:0051015">
    <property type="term" value="F:actin filament binding"/>
    <property type="evidence" value="ECO:0000318"/>
    <property type="project" value="GO_Central"/>
</dbReference>
<dbReference type="GO" id="GO:0005509">
    <property type="term" value="F:calcium ion binding"/>
    <property type="evidence" value="ECO:0007669"/>
    <property type="project" value="InterPro"/>
</dbReference>
<dbReference type="GO" id="GO:0005200">
    <property type="term" value="F:structural constituent of cytoskeleton"/>
    <property type="evidence" value="ECO:0000304"/>
    <property type="project" value="ProtInc"/>
</dbReference>
<dbReference type="GO" id="GO:0051017">
    <property type="term" value="P:actin filament bundle assembly"/>
    <property type="evidence" value="ECO:0000318"/>
    <property type="project" value="GO_Central"/>
</dbReference>
<dbReference type="GO" id="GO:0051639">
    <property type="term" value="P:actin filament network formation"/>
    <property type="evidence" value="ECO:0000318"/>
    <property type="project" value="GO_Central"/>
</dbReference>
<dbReference type="GO" id="GO:0060088">
    <property type="term" value="P:auditory receptor cell stereocilium organization"/>
    <property type="evidence" value="ECO:0000250"/>
    <property type="project" value="UniProtKB"/>
</dbReference>
<dbReference type="GO" id="GO:0001951">
    <property type="term" value="P:intestinal D-glucose absorption"/>
    <property type="evidence" value="ECO:0007669"/>
    <property type="project" value="Ensembl"/>
</dbReference>
<dbReference type="GO" id="GO:0040018">
    <property type="term" value="P:positive regulation of multicellular organism growth"/>
    <property type="evidence" value="ECO:0007669"/>
    <property type="project" value="Ensembl"/>
</dbReference>
<dbReference type="GO" id="GO:1903078">
    <property type="term" value="P:positive regulation of protein localization to plasma membrane"/>
    <property type="evidence" value="ECO:0000250"/>
    <property type="project" value="UniProtKB"/>
</dbReference>
<dbReference type="GO" id="GO:0032532">
    <property type="term" value="P:regulation of microvillus length"/>
    <property type="evidence" value="ECO:0007669"/>
    <property type="project" value="Ensembl"/>
</dbReference>
<dbReference type="GO" id="GO:1902896">
    <property type="term" value="P:terminal web assembly"/>
    <property type="evidence" value="ECO:0007669"/>
    <property type="project" value="Ensembl"/>
</dbReference>
<dbReference type="GO" id="GO:0060121">
    <property type="term" value="P:vestibular receptor cell stereocilium organization"/>
    <property type="evidence" value="ECO:0000250"/>
    <property type="project" value="UniProtKB"/>
</dbReference>
<dbReference type="CDD" id="cd21323">
    <property type="entry name" value="CH_PLS1_rpt1"/>
    <property type="match status" value="1"/>
</dbReference>
<dbReference type="CDD" id="cd21326">
    <property type="entry name" value="CH_PLS1_rpt2"/>
    <property type="match status" value="1"/>
</dbReference>
<dbReference type="CDD" id="cd21329">
    <property type="entry name" value="CH_PLS1_rpt3"/>
    <property type="match status" value="1"/>
</dbReference>
<dbReference type="CDD" id="cd21332">
    <property type="entry name" value="CH_PLS1_rpt4"/>
    <property type="match status" value="1"/>
</dbReference>
<dbReference type="CDD" id="cd00051">
    <property type="entry name" value="EFh"/>
    <property type="match status" value="1"/>
</dbReference>
<dbReference type="FunFam" id="1.10.238.10:FF:000059">
    <property type="entry name" value="Plastin 1"/>
    <property type="match status" value="1"/>
</dbReference>
<dbReference type="FunFam" id="1.10.418.10:FF:000010">
    <property type="entry name" value="Plastin-3 isoform 1"/>
    <property type="match status" value="1"/>
</dbReference>
<dbReference type="FunFam" id="1.10.418.10:FF:000012">
    <property type="entry name" value="Plastin-3 isoform 1"/>
    <property type="match status" value="1"/>
</dbReference>
<dbReference type="FunFam" id="1.10.418.10:FF:000014">
    <property type="entry name" value="Plastin-3 isoform 1"/>
    <property type="match status" value="1"/>
</dbReference>
<dbReference type="FunFam" id="1.10.418.10:FF:000025">
    <property type="entry name" value="Plastin-3 isoform 1"/>
    <property type="match status" value="1"/>
</dbReference>
<dbReference type="Gene3D" id="1.10.418.10">
    <property type="entry name" value="Calponin-like domain"/>
    <property type="match status" value="4"/>
</dbReference>
<dbReference type="Gene3D" id="1.10.238.10">
    <property type="entry name" value="EF-hand"/>
    <property type="match status" value="1"/>
</dbReference>
<dbReference type="InterPro" id="IPR001589">
    <property type="entry name" value="Actinin_actin-bd_CS"/>
</dbReference>
<dbReference type="InterPro" id="IPR001715">
    <property type="entry name" value="CH_dom"/>
</dbReference>
<dbReference type="InterPro" id="IPR036872">
    <property type="entry name" value="CH_dom_sf"/>
</dbReference>
<dbReference type="InterPro" id="IPR011992">
    <property type="entry name" value="EF-hand-dom_pair"/>
</dbReference>
<dbReference type="InterPro" id="IPR018247">
    <property type="entry name" value="EF_Hand_1_Ca_BS"/>
</dbReference>
<dbReference type="InterPro" id="IPR002048">
    <property type="entry name" value="EF_hand_dom"/>
</dbReference>
<dbReference type="InterPro" id="IPR039959">
    <property type="entry name" value="Fimbrin/Plastin"/>
</dbReference>
<dbReference type="PANTHER" id="PTHR19961">
    <property type="entry name" value="FIMBRIN/PLASTIN"/>
    <property type="match status" value="1"/>
</dbReference>
<dbReference type="PANTHER" id="PTHR19961:SF27">
    <property type="entry name" value="PLASTIN-1"/>
    <property type="match status" value="1"/>
</dbReference>
<dbReference type="Pfam" id="PF00307">
    <property type="entry name" value="CH"/>
    <property type="match status" value="4"/>
</dbReference>
<dbReference type="Pfam" id="PF13499">
    <property type="entry name" value="EF-hand_7"/>
    <property type="match status" value="1"/>
</dbReference>
<dbReference type="SMART" id="SM00033">
    <property type="entry name" value="CH"/>
    <property type="match status" value="4"/>
</dbReference>
<dbReference type="SMART" id="SM00054">
    <property type="entry name" value="EFh"/>
    <property type="match status" value="2"/>
</dbReference>
<dbReference type="SUPFAM" id="SSF47576">
    <property type="entry name" value="Calponin-homology domain, CH-domain"/>
    <property type="match status" value="1"/>
</dbReference>
<dbReference type="SUPFAM" id="SSF47473">
    <property type="entry name" value="EF-hand"/>
    <property type="match status" value="1"/>
</dbReference>
<dbReference type="PROSITE" id="PS00019">
    <property type="entry name" value="ACTININ_1"/>
    <property type="match status" value="2"/>
</dbReference>
<dbReference type="PROSITE" id="PS00020">
    <property type="entry name" value="ACTININ_2"/>
    <property type="match status" value="2"/>
</dbReference>
<dbReference type="PROSITE" id="PS50021">
    <property type="entry name" value="CH"/>
    <property type="match status" value="4"/>
</dbReference>
<dbReference type="PROSITE" id="PS00018">
    <property type="entry name" value="EF_HAND_1"/>
    <property type="match status" value="2"/>
</dbReference>
<dbReference type="PROSITE" id="PS50222">
    <property type="entry name" value="EF_HAND_2"/>
    <property type="match status" value="2"/>
</dbReference>
<organism>
    <name type="scientific">Homo sapiens</name>
    <name type="common">Human</name>
    <dbReference type="NCBI Taxonomy" id="9606"/>
    <lineage>
        <taxon>Eukaryota</taxon>
        <taxon>Metazoa</taxon>
        <taxon>Chordata</taxon>
        <taxon>Craniata</taxon>
        <taxon>Vertebrata</taxon>
        <taxon>Euteleostomi</taxon>
        <taxon>Mammalia</taxon>
        <taxon>Eutheria</taxon>
        <taxon>Euarchontoglires</taxon>
        <taxon>Primates</taxon>
        <taxon>Haplorrhini</taxon>
        <taxon>Catarrhini</taxon>
        <taxon>Hominidae</taxon>
        <taxon>Homo</taxon>
    </lineage>
</organism>